<gene>
    <name type="primary">His3</name>
</gene>
<protein>
    <recommendedName>
        <fullName>Histone H3</fullName>
    </recommendedName>
</protein>
<proteinExistence type="inferred from homology"/>
<dbReference type="EMBL" id="X17072">
    <property type="protein sequence ID" value="CAA34919.1"/>
    <property type="molecule type" value="Genomic_DNA"/>
</dbReference>
<dbReference type="EMBL" id="X52576">
    <property type="protein sequence ID" value="CAA36805.1"/>
    <property type="molecule type" value="Genomic_DNA"/>
</dbReference>
<dbReference type="SMR" id="P84236"/>
<dbReference type="EnsemblMetazoa" id="XM_030223116.1">
    <property type="protein sequence ID" value="XP_030078976.1"/>
    <property type="gene ID" value="LOC115482866"/>
</dbReference>
<dbReference type="EnsemblMetazoa" id="XM_030223148.1">
    <property type="protein sequence ID" value="XP_030079008.1"/>
    <property type="gene ID" value="LOC115482900"/>
</dbReference>
<dbReference type="EnsemblMetazoa" id="XM_030224475.1">
    <property type="protein sequence ID" value="XP_030080335.1"/>
    <property type="gene ID" value="LOC115483211"/>
</dbReference>
<dbReference type="EnsemblMetazoa" id="XM_030224575.1">
    <property type="protein sequence ID" value="XP_030080435.1"/>
    <property type="gene ID" value="LOC115483231"/>
</dbReference>
<dbReference type="EnsemblMetazoa" id="XM_030224576.1">
    <property type="protein sequence ID" value="XP_030080436.1"/>
    <property type="gene ID" value="LOC115483232"/>
</dbReference>
<dbReference type="OrthoDB" id="7942823at2759"/>
<dbReference type="Proteomes" id="UP000504633">
    <property type="component" value="Unplaced"/>
</dbReference>
<dbReference type="GO" id="GO:0000786">
    <property type="term" value="C:nucleosome"/>
    <property type="evidence" value="ECO:0007669"/>
    <property type="project" value="UniProtKB-KW"/>
</dbReference>
<dbReference type="GO" id="GO:0005634">
    <property type="term" value="C:nucleus"/>
    <property type="evidence" value="ECO:0007669"/>
    <property type="project" value="UniProtKB-SubCell"/>
</dbReference>
<dbReference type="GO" id="GO:0003677">
    <property type="term" value="F:DNA binding"/>
    <property type="evidence" value="ECO:0007669"/>
    <property type="project" value="UniProtKB-KW"/>
</dbReference>
<dbReference type="GO" id="GO:0046982">
    <property type="term" value="F:protein heterodimerization activity"/>
    <property type="evidence" value="ECO:0007669"/>
    <property type="project" value="InterPro"/>
</dbReference>
<dbReference type="GO" id="GO:0030527">
    <property type="term" value="F:structural constituent of chromatin"/>
    <property type="evidence" value="ECO:0007669"/>
    <property type="project" value="InterPro"/>
</dbReference>
<dbReference type="CDD" id="cd22911">
    <property type="entry name" value="HFD_H3"/>
    <property type="match status" value="1"/>
</dbReference>
<dbReference type="FunFam" id="1.10.20.10:FF:000078">
    <property type="entry name" value="Histone H3"/>
    <property type="match status" value="1"/>
</dbReference>
<dbReference type="FunFam" id="1.10.20.10:FF:000044">
    <property type="entry name" value="Histone H3.3"/>
    <property type="match status" value="1"/>
</dbReference>
<dbReference type="Gene3D" id="1.10.20.10">
    <property type="entry name" value="Histone, subunit A"/>
    <property type="match status" value="1"/>
</dbReference>
<dbReference type="InterPro" id="IPR009072">
    <property type="entry name" value="Histone-fold"/>
</dbReference>
<dbReference type="InterPro" id="IPR007125">
    <property type="entry name" value="Histone_H2A/H2B/H3"/>
</dbReference>
<dbReference type="InterPro" id="IPR000164">
    <property type="entry name" value="Histone_H3/CENP-A"/>
</dbReference>
<dbReference type="PANTHER" id="PTHR11426">
    <property type="entry name" value="HISTONE H3"/>
    <property type="match status" value="1"/>
</dbReference>
<dbReference type="Pfam" id="PF00125">
    <property type="entry name" value="Histone"/>
    <property type="match status" value="1"/>
</dbReference>
<dbReference type="PRINTS" id="PR00622">
    <property type="entry name" value="HISTONEH3"/>
</dbReference>
<dbReference type="SMART" id="SM00428">
    <property type="entry name" value="H3"/>
    <property type="match status" value="1"/>
</dbReference>
<dbReference type="SUPFAM" id="SSF47113">
    <property type="entry name" value="Histone-fold"/>
    <property type="match status" value="1"/>
</dbReference>
<dbReference type="PROSITE" id="PS00322">
    <property type="entry name" value="HISTONE_H3_1"/>
    <property type="match status" value="1"/>
</dbReference>
<dbReference type="PROSITE" id="PS00959">
    <property type="entry name" value="HISTONE_H3_2"/>
    <property type="match status" value="1"/>
</dbReference>
<evidence type="ECO:0000250" key="1"/>
<evidence type="ECO:0000250" key="2">
    <source>
        <dbReference type="UniProtKB" id="P02299"/>
    </source>
</evidence>
<evidence type="ECO:0000256" key="3">
    <source>
        <dbReference type="SAM" id="MobiDB-lite"/>
    </source>
</evidence>
<evidence type="ECO:0000305" key="4"/>
<name>H3_DROHY</name>
<sequence length="136" mass="15388">MARTKQTARKSTGGKAPRKQLATKAARKSAPATGGVKKPHRYRPGTVALREIRRYQKSTELLIRKLPFQRLVREIAQDFKTDLRFQSSAVMALQEASEAYLVGLFEDTNLCAIHAKRVTIMPKDIQLARRIRGERA</sequence>
<feature type="initiator methionine" description="Removed" evidence="1">
    <location>
        <position position="1"/>
    </location>
</feature>
<feature type="chain" id="PRO_0000221301" description="Histone H3">
    <location>
        <begin position="2"/>
        <end position="136"/>
    </location>
</feature>
<feature type="region of interest" description="Disordered" evidence="3">
    <location>
        <begin position="1"/>
        <end position="43"/>
    </location>
</feature>
<feature type="region of interest" description="Su(var)205 chromodomain-binding" evidence="2">
    <location>
        <begin position="6"/>
        <end position="11"/>
    </location>
</feature>
<feature type="modified residue" description="Phosphothreonine" evidence="2">
    <location>
        <position position="4"/>
    </location>
</feature>
<feature type="modified residue" description="N6,N6,N6-trimethyllysine; alternate" evidence="2">
    <location>
        <position position="5"/>
    </location>
</feature>
<feature type="modified residue" description="N6,N6-dimethyllysine; alternate" evidence="2">
    <location>
        <position position="5"/>
    </location>
</feature>
<feature type="modified residue" description="N6-methyllysine; alternate" evidence="2">
    <location>
        <position position="5"/>
    </location>
</feature>
<feature type="modified residue" description="N6,N6,N6-trimethyllysine; alternate" evidence="2">
    <location>
        <position position="10"/>
    </location>
</feature>
<feature type="modified residue" description="N6,N6-dimethyllysine; alternate" evidence="2">
    <location>
        <position position="10"/>
    </location>
</feature>
<feature type="modified residue" description="N6-acetyllysine; alternate" evidence="2">
    <location>
        <position position="10"/>
    </location>
</feature>
<feature type="modified residue" description="N6-methyllysine; alternate" evidence="2">
    <location>
        <position position="10"/>
    </location>
</feature>
<feature type="modified residue" description="Phosphoserine" evidence="2">
    <location>
        <position position="11"/>
    </location>
</feature>
<feature type="modified residue" description="N6,N6-dimethyllysine; alternate" evidence="2">
    <location>
        <position position="15"/>
    </location>
</feature>
<feature type="modified residue" description="N6-acetyllysine; alternate" evidence="2">
    <location>
        <position position="15"/>
    </location>
</feature>
<feature type="modified residue" description="N6-methyllysine; alternate" evidence="2">
    <location>
        <position position="15"/>
    </location>
</feature>
<feature type="modified residue" description="N6-acetyllysine" evidence="2">
    <location>
        <position position="19"/>
    </location>
</feature>
<feature type="modified residue" description="N6-acetyllysine" evidence="2">
    <location>
        <position position="24"/>
    </location>
</feature>
<feature type="modified residue" description="N6,N6,N6-trimethyllysine; alternate" evidence="2">
    <location>
        <position position="28"/>
    </location>
</feature>
<feature type="modified residue" description="N6,N6-dimethyllysine; alternate" evidence="2">
    <location>
        <position position="28"/>
    </location>
</feature>
<feature type="modified residue" description="N6-methyllysine; alternate" evidence="2">
    <location>
        <position position="28"/>
    </location>
</feature>
<feature type="modified residue" description="N6,N6-dimethyllysine; alternate" evidence="2">
    <location>
        <position position="37"/>
    </location>
</feature>
<feature type="modified residue" description="N6-methyllysine; alternate" evidence="2">
    <location>
        <position position="37"/>
    </location>
</feature>
<feature type="modified residue" description="N6,N6-dimethyllysine; alternate" evidence="2">
    <location>
        <position position="38"/>
    </location>
</feature>
<feature type="modified residue" description="N6-methyllysine; alternate" evidence="2">
    <location>
        <position position="38"/>
    </location>
</feature>
<feature type="modified residue" description="N6-succinyllysine" evidence="2">
    <location>
        <position position="57"/>
    </location>
</feature>
<feature type="modified residue" description="N6,N6-dimethyllysine; alternate" evidence="2">
    <location>
        <position position="80"/>
    </location>
</feature>
<feature type="modified residue" description="N6-methyllysine; alternate" evidence="2">
    <location>
        <position position="80"/>
    </location>
</feature>
<feature type="modified residue" description="N6-succinyllysine; alternate" evidence="2">
    <location>
        <position position="80"/>
    </location>
</feature>
<feature type="sequence variant">
    <original>S</original>
    <variation>C</variation>
    <location>
        <position position="97"/>
    </location>
</feature>
<feature type="sequence variant">
    <original>I</original>
    <variation>M</variation>
    <location>
        <position position="113"/>
    </location>
</feature>
<comment type="function">
    <text evidence="2">Core component of nucleosome. Nucleosomes wrap and compact DNA into chromatin, limiting DNA accessibility to the cellular machineries which require DNA as a template. Histones thereby play a central role in transcription regulation, DNA repair, DNA replication and chromosomal stability. DNA accessibility is regulated via a complex set of post-translational modifications of histones, also called histone code, and nucleosome remodeling.</text>
</comment>
<comment type="subunit">
    <text evidence="2">The nucleosome is a histone octamer containing two molecules each of H2A, H2B, H3 and H4 assembled in one H3-H4 heterotetramer and two H2A-H2B heterodimers. The octamer wraps approximately 147 bp of DNA. Interacts (via N-terminus di- or tri-methylated on Lys-10 (H3K9me2/3)) with rhi (via Chromo domain); this interaction is direct. Interacts with Nasp. Interacts (via N-terminus di- or tri-methylated on Lys-10 (H3K9me2/3)) with Su(var)205/HP1 (via Chromo domain); the interaction is direct.</text>
</comment>
<comment type="subcellular location">
    <subcellularLocation>
        <location evidence="4">Nucleus</location>
    </subcellularLocation>
    <subcellularLocation>
        <location evidence="4">Chromosome</location>
    </subcellularLocation>
</comment>
<comment type="PTM">
    <text evidence="2">Phosphorylated by the catalytic component of the Dbf4-dependent kinase (DDK) complex Cdc7. Phosphorylated at Thr-4 (H3T3ph) by Haspin during mitosis and interphase. Phosphorylation at Ser-11 by aurB/ial during mitosis and meiosis is crucial for chromosome condensation and cell-cycle progression. Phosphorylation at Ser-11 by JIL-1 during interphase is linked to gene activation and restricts the formation of heterochromatin at inappropriate sites. Phosphorylation at Ser-11 is enriched on male X chromosome compared to the autosome.</text>
</comment>
<comment type="PTM">
    <text evidence="2">Acetylated on Lys-10 (H3K9ac), Lys-15 (H3K14ac) Lys-19 (H3K18ac) and Lys-24 (H3K23ac); acetylated on Lys-10, Lys-15 and Lys-19, but not Lys-24, by the Chiffon histone acetyltransferase (CHAT) complex. Probably acetylated on Lys-10 in the larval central nervous system by the SAGA complex. Acetylation is generally linked to gene activation. Acetylated on Lys-15 during prophase I of meiosis. Phosphorylation of H2A 'Thr-119' is a prerequisite for H3 Lys-15 acetylation. Acetylation on Lys-15 is enriched on male X chromosome compared to the autosome.</text>
</comment>
<comment type="PTM">
    <text evidence="2">Methylation at Lys-5 or Lys-80 is generally associated with active chromatin. Methylation at Lys-80 by gpp occurs at low levels in specific developmental stages and tissues undergoing active cell division, and at highest levels in epidermal cells undergoing differentiation. Tri-methylation at Lys-10 (H3K9me3) is generally associated with transcriptional repression. Tri-methylation at Lys-10 (H3K9me3) is partly stimulated at specific chromatin loci by homologous piRNAs. Tri-methylation at Lys-10 (H3K9me3) stimulates recruitment of the Rhino-Deadlock-Cutoff (RDC) complex to promote piRNA biogenesis. Tri-methylation at Lys-10 (H3K9me3) stimulates binding of su(var)205/HP1.</text>
</comment>
<comment type="similarity">
    <text evidence="4">Belongs to the histone H3 family.</text>
</comment>
<keyword id="KW-0007">Acetylation</keyword>
<keyword id="KW-0158">Chromosome</keyword>
<keyword id="KW-0238">DNA-binding</keyword>
<keyword id="KW-0488">Methylation</keyword>
<keyword id="KW-0544">Nucleosome core</keyword>
<keyword id="KW-0539">Nucleus</keyword>
<keyword id="KW-0597">Phosphoprotein</keyword>
<accession>P84236</accession>
<accession>P02295</accession>
<accession>P02297</accession>
<accession>P16105</accession>
<accession>P17269</accession>
<accession>P17320</accession>
<organism>
    <name type="scientific">Drosophila hydei</name>
    <name type="common">Fruit fly</name>
    <dbReference type="NCBI Taxonomy" id="7224"/>
    <lineage>
        <taxon>Eukaryota</taxon>
        <taxon>Metazoa</taxon>
        <taxon>Ecdysozoa</taxon>
        <taxon>Arthropoda</taxon>
        <taxon>Hexapoda</taxon>
        <taxon>Insecta</taxon>
        <taxon>Pterygota</taxon>
        <taxon>Neoptera</taxon>
        <taxon>Endopterygota</taxon>
        <taxon>Diptera</taxon>
        <taxon>Brachycera</taxon>
        <taxon>Muscomorpha</taxon>
        <taxon>Ephydroidea</taxon>
        <taxon>Drosophilidae</taxon>
        <taxon>Drosophila</taxon>
    </lineage>
</organism>
<reference key="1">
    <citation type="journal article" date="1990" name="Nucleic Acids Res.">
        <title>Isolation and characterization of a Drosophila hydei histone DNA repeat unit.</title>
        <authorList>
            <person name="Kremer H."/>
            <person name="Hennig W."/>
        </authorList>
    </citation>
    <scope>NUCLEOTIDE SEQUENCE [GENOMIC DNA]</scope>
</reference>
<reference key="2">
    <citation type="journal article" date="1993" name="Mol. Biol. Evol.">
        <title>Low codon bias and high rates of synonymous substitution in Drosophila hydei and D. melanogaster histone genes.</title>
        <authorList>
            <person name="Fitch D.H."/>
            <person name="Strausbaugh L.D."/>
        </authorList>
    </citation>
    <scope>NUCLEOTIDE SEQUENCE [GENOMIC DNA]</scope>
</reference>